<keyword id="KW-0143">Chaperone</keyword>
<keyword id="KW-0963">Cytoplasm</keyword>
<keyword id="KW-0346">Stress response</keyword>
<comment type="function">
    <text evidence="1">Participates actively in the response to hyperosmotic and heat shock by preventing the aggregation of stress-denatured proteins, in association with DnaK and GrpE. It is the nucleotide exchange factor for DnaK and may function as a thermosensor. Unfolded proteins bind initially to DnaJ; upon interaction with the DnaJ-bound protein, DnaK hydrolyzes its bound ATP, resulting in the formation of a stable complex. GrpE releases ADP from DnaK; ATP binding to DnaK triggers the release of the substrate protein, thus completing the reaction cycle. Several rounds of ATP-dependent interactions between DnaJ, DnaK and GrpE are required for fully efficient folding.</text>
</comment>
<comment type="subunit">
    <text evidence="1">Homodimer.</text>
</comment>
<comment type="subcellular location">
    <subcellularLocation>
        <location evidence="1">Cytoplasm</location>
    </subcellularLocation>
</comment>
<comment type="similarity">
    <text evidence="1">Belongs to the GrpE family.</text>
</comment>
<feature type="chain" id="PRO_1000053668" description="Protein GrpE">
    <location>
        <begin position="1"/>
        <end position="192"/>
    </location>
</feature>
<feature type="region of interest" description="Disordered" evidence="2">
    <location>
        <begin position="1"/>
        <end position="34"/>
    </location>
</feature>
<feature type="compositionally biased region" description="Polar residues" evidence="2">
    <location>
        <begin position="20"/>
        <end position="31"/>
    </location>
</feature>
<reference key="1">
    <citation type="journal article" date="2004" name="Proc. Natl. Acad. Sci. U.S.A.">
        <title>Insights into the evolution of Yersinia pestis through whole-genome comparison with Yersinia pseudotuberculosis.</title>
        <authorList>
            <person name="Chain P.S.G."/>
            <person name="Carniel E."/>
            <person name="Larimer F.W."/>
            <person name="Lamerdin J."/>
            <person name="Stoutland P.O."/>
            <person name="Regala W.M."/>
            <person name="Georgescu A.M."/>
            <person name="Vergez L.M."/>
            <person name="Land M.L."/>
            <person name="Motin V.L."/>
            <person name="Brubaker R.R."/>
            <person name="Fowler J."/>
            <person name="Hinnebusch J."/>
            <person name="Marceau M."/>
            <person name="Medigue C."/>
            <person name="Simonet M."/>
            <person name="Chenal-Francisque V."/>
            <person name="Souza B."/>
            <person name="Dacheux D."/>
            <person name="Elliott J.M."/>
            <person name="Derbise A."/>
            <person name="Hauser L.J."/>
            <person name="Garcia E."/>
        </authorList>
    </citation>
    <scope>NUCLEOTIDE SEQUENCE [LARGE SCALE GENOMIC DNA]</scope>
    <source>
        <strain>IP32953</strain>
    </source>
</reference>
<evidence type="ECO:0000255" key="1">
    <source>
        <dbReference type="HAMAP-Rule" id="MF_01151"/>
    </source>
</evidence>
<evidence type="ECO:0000256" key="2">
    <source>
        <dbReference type="SAM" id="MobiDB-lite"/>
    </source>
</evidence>
<name>GRPE_YERPS</name>
<proteinExistence type="inferred from homology"/>
<gene>
    <name evidence="1" type="primary">grpE</name>
    <name type="ordered locus">YPTB1141</name>
</gene>
<protein>
    <recommendedName>
        <fullName evidence="1">Protein GrpE</fullName>
    </recommendedName>
    <alternativeName>
        <fullName evidence="1">HSP-70 cofactor</fullName>
    </alternativeName>
</protein>
<organism>
    <name type="scientific">Yersinia pseudotuberculosis serotype I (strain IP32953)</name>
    <dbReference type="NCBI Taxonomy" id="273123"/>
    <lineage>
        <taxon>Bacteria</taxon>
        <taxon>Pseudomonadati</taxon>
        <taxon>Pseudomonadota</taxon>
        <taxon>Gammaproteobacteria</taxon>
        <taxon>Enterobacterales</taxon>
        <taxon>Yersiniaceae</taxon>
        <taxon>Yersinia</taxon>
    </lineage>
</organism>
<dbReference type="EMBL" id="BX936398">
    <property type="protein sequence ID" value="CAH20381.1"/>
    <property type="molecule type" value="Genomic_DNA"/>
</dbReference>
<dbReference type="RefSeq" id="WP_002224622.1">
    <property type="nucleotide sequence ID" value="NZ_CP009712.1"/>
</dbReference>
<dbReference type="SMR" id="Q66DA8"/>
<dbReference type="GeneID" id="49786790"/>
<dbReference type="KEGG" id="ypo:BZ17_1396"/>
<dbReference type="KEGG" id="yps:YPTB1141"/>
<dbReference type="PATRIC" id="fig|273123.14.peg.1481"/>
<dbReference type="Proteomes" id="UP000001011">
    <property type="component" value="Chromosome"/>
</dbReference>
<dbReference type="GO" id="GO:0005829">
    <property type="term" value="C:cytosol"/>
    <property type="evidence" value="ECO:0007669"/>
    <property type="project" value="TreeGrafter"/>
</dbReference>
<dbReference type="GO" id="GO:0000774">
    <property type="term" value="F:adenyl-nucleotide exchange factor activity"/>
    <property type="evidence" value="ECO:0007669"/>
    <property type="project" value="InterPro"/>
</dbReference>
<dbReference type="GO" id="GO:0042803">
    <property type="term" value="F:protein homodimerization activity"/>
    <property type="evidence" value="ECO:0007669"/>
    <property type="project" value="InterPro"/>
</dbReference>
<dbReference type="GO" id="GO:0051087">
    <property type="term" value="F:protein-folding chaperone binding"/>
    <property type="evidence" value="ECO:0007669"/>
    <property type="project" value="InterPro"/>
</dbReference>
<dbReference type="GO" id="GO:0051082">
    <property type="term" value="F:unfolded protein binding"/>
    <property type="evidence" value="ECO:0007669"/>
    <property type="project" value="TreeGrafter"/>
</dbReference>
<dbReference type="GO" id="GO:0006457">
    <property type="term" value="P:protein folding"/>
    <property type="evidence" value="ECO:0007669"/>
    <property type="project" value="InterPro"/>
</dbReference>
<dbReference type="CDD" id="cd00446">
    <property type="entry name" value="GrpE"/>
    <property type="match status" value="1"/>
</dbReference>
<dbReference type="FunFam" id="2.30.22.10:FF:000001">
    <property type="entry name" value="Protein GrpE"/>
    <property type="match status" value="1"/>
</dbReference>
<dbReference type="FunFam" id="3.90.20.20:FF:000001">
    <property type="entry name" value="Protein GrpE"/>
    <property type="match status" value="1"/>
</dbReference>
<dbReference type="Gene3D" id="3.90.20.20">
    <property type="match status" value="1"/>
</dbReference>
<dbReference type="Gene3D" id="2.30.22.10">
    <property type="entry name" value="Head domain of nucleotide exchange factor GrpE"/>
    <property type="match status" value="1"/>
</dbReference>
<dbReference type="HAMAP" id="MF_01151">
    <property type="entry name" value="GrpE"/>
    <property type="match status" value="1"/>
</dbReference>
<dbReference type="InterPro" id="IPR000740">
    <property type="entry name" value="GrpE"/>
</dbReference>
<dbReference type="InterPro" id="IPR013805">
    <property type="entry name" value="GrpE_coiled_coil"/>
</dbReference>
<dbReference type="InterPro" id="IPR009012">
    <property type="entry name" value="GrpE_head"/>
</dbReference>
<dbReference type="NCBIfam" id="NF010737">
    <property type="entry name" value="PRK14139.1"/>
    <property type="match status" value="1"/>
</dbReference>
<dbReference type="NCBIfam" id="NF010738">
    <property type="entry name" value="PRK14140.1"/>
    <property type="match status" value="1"/>
</dbReference>
<dbReference type="NCBIfam" id="NF010748">
    <property type="entry name" value="PRK14150.1"/>
    <property type="match status" value="1"/>
</dbReference>
<dbReference type="PANTHER" id="PTHR21237">
    <property type="entry name" value="GRPE PROTEIN"/>
    <property type="match status" value="1"/>
</dbReference>
<dbReference type="PANTHER" id="PTHR21237:SF23">
    <property type="entry name" value="GRPE PROTEIN HOMOLOG, MITOCHONDRIAL"/>
    <property type="match status" value="1"/>
</dbReference>
<dbReference type="Pfam" id="PF01025">
    <property type="entry name" value="GrpE"/>
    <property type="match status" value="1"/>
</dbReference>
<dbReference type="PRINTS" id="PR00773">
    <property type="entry name" value="GRPEPROTEIN"/>
</dbReference>
<dbReference type="SUPFAM" id="SSF58014">
    <property type="entry name" value="Coiled-coil domain of nucleotide exchange factor GrpE"/>
    <property type="match status" value="1"/>
</dbReference>
<dbReference type="SUPFAM" id="SSF51064">
    <property type="entry name" value="Head domain of nucleotide exchange factor GrpE"/>
    <property type="match status" value="1"/>
</dbReference>
<dbReference type="PROSITE" id="PS01071">
    <property type="entry name" value="GRPE"/>
    <property type="match status" value="1"/>
</dbReference>
<accession>Q66DA8</accession>
<sequence length="192" mass="21545">MSSKEQKTPNEQVSEEMENTAEQQVEATQETGECVDPRVAELEVQLSDALQRERESLLRAKAEVENIRRRTELDVEKAHKFALERFSSELLPVIDNLERALDTADKTNTELTSMIEGVELTLKSLLDAVGKFGIEVVGETHVPFNPEVHQAMTMLESADHEPNHVMMVMQKGYTLNGRLLRPAMVAVSKAKS</sequence>